<comment type="function">
    <text evidence="1">Catalyzes the transfer of the L-Ara4N moiety of the glycolipid undecaprenyl phosphate-alpha-L-Ara4N to lipid A. The modified arabinose is attached to lipid A and is required for resistance to polymyxin and cationic antimicrobial peptides.</text>
</comment>
<comment type="catalytic activity">
    <reaction evidence="1">
        <text>4-amino-4-deoxy-alpha-L-arabinopyranosyl di-trans,octa-cis-undecaprenyl phosphate + lipid IVA = lipid IIA + di-trans,octa-cis-undecaprenyl phosphate.</text>
        <dbReference type="EC" id="2.4.2.43"/>
    </reaction>
</comment>
<comment type="pathway">
    <text evidence="1">Lipopolysaccharide metabolism; 4-amino-4-deoxy-beta-L-arabinose-lipid A biosynthesis.</text>
</comment>
<comment type="subcellular location">
    <subcellularLocation>
        <location evidence="1">Cell inner membrane</location>
        <topology evidence="1">Multi-pass membrane protein</topology>
    </subcellularLocation>
</comment>
<comment type="similarity">
    <text evidence="1">Belongs to the glycosyltransferase 83 family.</text>
</comment>
<name>ARNT1_PSEF5</name>
<feature type="chain" id="PRO_0000380019" description="Undecaprenyl phosphate-alpha-4-amino-4-deoxy-L-arabinose arabinosyl transferase 1">
    <location>
        <begin position="1"/>
        <end position="549"/>
    </location>
</feature>
<feature type="transmembrane region" description="Helical" evidence="1">
    <location>
        <begin position="9"/>
        <end position="29"/>
    </location>
</feature>
<feature type="transmembrane region" description="Helical" evidence="1">
    <location>
        <begin position="80"/>
        <end position="102"/>
    </location>
</feature>
<feature type="transmembrane region" description="Helical" evidence="1">
    <location>
        <begin position="112"/>
        <end position="132"/>
    </location>
</feature>
<feature type="transmembrane region" description="Helical" evidence="1">
    <location>
        <begin position="133"/>
        <end position="153"/>
    </location>
</feature>
<feature type="transmembrane region" description="Helical" evidence="1">
    <location>
        <begin position="176"/>
        <end position="196"/>
    </location>
</feature>
<feature type="transmembrane region" description="Helical" evidence="1">
    <location>
        <begin position="204"/>
        <end position="224"/>
    </location>
</feature>
<feature type="transmembrane region" description="Helical" evidence="1">
    <location>
        <begin position="257"/>
        <end position="277"/>
    </location>
</feature>
<feature type="transmembrane region" description="Helical" evidence="1">
    <location>
        <begin position="290"/>
        <end position="310"/>
    </location>
</feature>
<feature type="transmembrane region" description="Helical" evidence="1">
    <location>
        <begin position="312"/>
        <end position="332"/>
    </location>
</feature>
<feature type="transmembrane region" description="Helical" evidence="1">
    <location>
        <begin position="342"/>
        <end position="362"/>
    </location>
</feature>
<feature type="transmembrane region" description="Helical" evidence="1">
    <location>
        <begin position="377"/>
        <end position="397"/>
    </location>
</feature>
<feature type="transmembrane region" description="Helical" evidence="1">
    <location>
        <begin position="402"/>
        <end position="422"/>
    </location>
</feature>
<organism>
    <name type="scientific">Pseudomonas fluorescens (strain ATCC BAA-477 / NRRL B-23932 / Pf-5)</name>
    <dbReference type="NCBI Taxonomy" id="220664"/>
    <lineage>
        <taxon>Bacteria</taxon>
        <taxon>Pseudomonadati</taxon>
        <taxon>Pseudomonadota</taxon>
        <taxon>Gammaproteobacteria</taxon>
        <taxon>Pseudomonadales</taxon>
        <taxon>Pseudomonadaceae</taxon>
        <taxon>Pseudomonas</taxon>
    </lineage>
</organism>
<reference key="1">
    <citation type="journal article" date="2005" name="Nat. Biotechnol.">
        <title>Complete genome sequence of the plant commensal Pseudomonas fluorescens Pf-5.</title>
        <authorList>
            <person name="Paulsen I.T."/>
            <person name="Press C.M."/>
            <person name="Ravel J."/>
            <person name="Kobayashi D.Y."/>
            <person name="Myers G.S.A."/>
            <person name="Mavrodi D.V."/>
            <person name="DeBoy R.T."/>
            <person name="Seshadri R."/>
            <person name="Ren Q."/>
            <person name="Madupu R."/>
            <person name="Dodson R.J."/>
            <person name="Durkin A.S."/>
            <person name="Brinkac L.M."/>
            <person name="Daugherty S.C."/>
            <person name="Sullivan S.A."/>
            <person name="Rosovitz M.J."/>
            <person name="Gwinn M.L."/>
            <person name="Zhou L."/>
            <person name="Schneider D.J."/>
            <person name="Cartinhour S.W."/>
            <person name="Nelson W.C."/>
            <person name="Weidman J."/>
            <person name="Watkins K."/>
            <person name="Tran K."/>
            <person name="Khouri H."/>
            <person name="Pierson E.A."/>
            <person name="Pierson L.S. III"/>
            <person name="Thomashow L.S."/>
            <person name="Loper J.E."/>
        </authorList>
    </citation>
    <scope>NUCLEOTIDE SEQUENCE [LARGE SCALE GENOMIC DNA]</scope>
    <source>
        <strain>ATCC BAA-477 / NRRL B-23932 / Pf-5</strain>
    </source>
</reference>
<dbReference type="EC" id="2.4.2.43" evidence="1"/>
<dbReference type="EMBL" id="CP000076">
    <property type="protein sequence ID" value="AAY92317.1"/>
    <property type="molecule type" value="Genomic_DNA"/>
</dbReference>
<dbReference type="RefSeq" id="WP_011061335.1">
    <property type="nucleotide sequence ID" value="NC_004129.6"/>
</dbReference>
<dbReference type="SMR" id="Q4KC80"/>
<dbReference type="STRING" id="220664.PFL_3047"/>
<dbReference type="CAZy" id="GT83">
    <property type="family name" value="Glycosyltransferase Family 83"/>
</dbReference>
<dbReference type="GeneID" id="57476068"/>
<dbReference type="KEGG" id="pfl:PFL_3047"/>
<dbReference type="PATRIC" id="fig|220664.5.peg.3107"/>
<dbReference type="eggNOG" id="COG1807">
    <property type="taxonomic scope" value="Bacteria"/>
</dbReference>
<dbReference type="HOGENOM" id="CLU_019200_2_1_6"/>
<dbReference type="UniPathway" id="UPA00037"/>
<dbReference type="Proteomes" id="UP000008540">
    <property type="component" value="Chromosome"/>
</dbReference>
<dbReference type="GO" id="GO:0005886">
    <property type="term" value="C:plasma membrane"/>
    <property type="evidence" value="ECO:0007669"/>
    <property type="project" value="UniProtKB-SubCell"/>
</dbReference>
<dbReference type="GO" id="GO:0103015">
    <property type="term" value="F:4-amino-4-deoxy-L-arabinose transferase activity"/>
    <property type="evidence" value="ECO:0007669"/>
    <property type="project" value="UniProtKB-EC"/>
</dbReference>
<dbReference type="GO" id="GO:0000030">
    <property type="term" value="F:mannosyltransferase activity"/>
    <property type="evidence" value="ECO:0007669"/>
    <property type="project" value="InterPro"/>
</dbReference>
<dbReference type="GO" id="GO:0009245">
    <property type="term" value="P:lipid A biosynthetic process"/>
    <property type="evidence" value="ECO:0007669"/>
    <property type="project" value="UniProtKB-UniRule"/>
</dbReference>
<dbReference type="GO" id="GO:0009103">
    <property type="term" value="P:lipopolysaccharide biosynthetic process"/>
    <property type="evidence" value="ECO:0007669"/>
    <property type="project" value="UniProtKB-KW"/>
</dbReference>
<dbReference type="GO" id="GO:0006493">
    <property type="term" value="P:protein O-linked glycosylation"/>
    <property type="evidence" value="ECO:0007669"/>
    <property type="project" value="InterPro"/>
</dbReference>
<dbReference type="GO" id="GO:0010041">
    <property type="term" value="P:response to iron(III) ion"/>
    <property type="evidence" value="ECO:0007669"/>
    <property type="project" value="TreeGrafter"/>
</dbReference>
<dbReference type="HAMAP" id="MF_01165">
    <property type="entry name" value="ArnT_transfer"/>
    <property type="match status" value="1"/>
</dbReference>
<dbReference type="InterPro" id="IPR022839">
    <property type="entry name" value="ArnT_tfrase"/>
</dbReference>
<dbReference type="InterPro" id="IPR003342">
    <property type="entry name" value="Glyco_trans_39/83"/>
</dbReference>
<dbReference type="InterPro" id="IPR050297">
    <property type="entry name" value="LipidA_mod_glycosyltrf_83"/>
</dbReference>
<dbReference type="NCBIfam" id="NF009784">
    <property type="entry name" value="PRK13279.1"/>
    <property type="match status" value="1"/>
</dbReference>
<dbReference type="PANTHER" id="PTHR33908">
    <property type="entry name" value="MANNOSYLTRANSFERASE YKCB-RELATED"/>
    <property type="match status" value="1"/>
</dbReference>
<dbReference type="PANTHER" id="PTHR33908:SF3">
    <property type="entry name" value="UNDECAPRENYL PHOSPHATE-ALPHA-4-AMINO-4-DEOXY-L-ARABINOSE ARABINOSYL TRANSFERASE"/>
    <property type="match status" value="1"/>
</dbReference>
<dbReference type="Pfam" id="PF02366">
    <property type="entry name" value="PMT"/>
    <property type="match status" value="1"/>
</dbReference>
<protein>
    <recommendedName>
        <fullName evidence="1">Undecaprenyl phosphate-alpha-4-amino-4-deoxy-L-arabinose arabinosyl transferase 1</fullName>
        <ecNumber evidence="1">2.4.2.43</ecNumber>
    </recommendedName>
    <alternativeName>
        <fullName evidence="1">4-amino-4-deoxy-L-arabinose lipid A transferase 1</fullName>
    </alternativeName>
    <alternativeName>
        <fullName evidence="1">Lipid IV(A) 4-amino-4-deoxy-L-arabinosyltransferase</fullName>
    </alternativeName>
    <alternativeName>
        <fullName evidence="1">Undecaprenyl phosphate-alpha-L-Ara4N transferase 1</fullName>
    </alternativeName>
</protein>
<proteinExistence type="inferred from homology"/>
<evidence type="ECO:0000255" key="1">
    <source>
        <dbReference type="HAMAP-Rule" id="MF_01165"/>
    </source>
</evidence>
<accession>Q4KC80</accession>
<gene>
    <name evidence="1" type="primary">arnT1</name>
    <name type="ordered locus">PFL_3047</name>
</gene>
<keyword id="KW-0997">Cell inner membrane</keyword>
<keyword id="KW-1003">Cell membrane</keyword>
<keyword id="KW-0328">Glycosyltransferase</keyword>
<keyword id="KW-0441">Lipid A biosynthesis</keyword>
<keyword id="KW-0444">Lipid biosynthesis</keyword>
<keyword id="KW-0443">Lipid metabolism</keyword>
<keyword id="KW-0448">Lipopolysaccharide biosynthesis</keyword>
<keyword id="KW-0472">Membrane</keyword>
<keyword id="KW-0808">Transferase</keyword>
<keyword id="KW-0812">Transmembrane</keyword>
<keyword id="KW-1133">Transmembrane helix</keyword>
<sequence length="549" mass="61527">MTRRWALPLLLIAFGLFYLLPLATHGLWIPDETRYAQISQEMLLTGKWASPHFMGIRYFEKPVAGYWMIAIGQALFGDNLFGVRVASALSTGLSVVLAYLLARRLWNDPRKSLASALLYMSFTVVALQAGYANLDPQFTFWVNLSLVALWFTFDCRTTRGQVLAWVALGLACGMGFMTKGFLAWLLPVLVALPYAIWQKRLRSLLIYGGIGVLVAILISLPWALAVHSQEPDYWRFFFWHEHIRRFAGDDAQHASPWWYYLPLLVGFSVPWVLLLPAGLKQAWQQRRQNSSGFLLLWLVLPLAFFSLSKGKLPAYILPCLLPLALLMGNTLVDRLAAGKTRLLAFNGVLNLVAGLLGLLALVYFQMKKPVYVDEPQHLVLVYVLLLGWILSNLLQAMRPLTLWAAPALGSFLLVALAPAALPNSVVYNKIPDQFIIDHVAELGQAKALLSNDLGAASALAWRLRRPDVTLYNTEGEVKYGLGYEDTAARKVDLNQVQPWIAEARKQGSIGVVMRVKSSDEEHEVELLPKDAKRYEQGNIVIFIIPQSQP</sequence>